<comment type="similarity">
    <text evidence="1">Belongs to the UPF0346 family.</text>
</comment>
<evidence type="ECO:0000255" key="1">
    <source>
        <dbReference type="HAMAP-Rule" id="MF_01538"/>
    </source>
</evidence>
<accession>B1IBB0</accession>
<protein>
    <recommendedName>
        <fullName evidence="1">UPF0346 protein SPH_1051</fullName>
    </recommendedName>
</protein>
<organism>
    <name type="scientific">Streptococcus pneumoniae (strain Hungary19A-6)</name>
    <dbReference type="NCBI Taxonomy" id="487214"/>
    <lineage>
        <taxon>Bacteria</taxon>
        <taxon>Bacillati</taxon>
        <taxon>Bacillota</taxon>
        <taxon>Bacilli</taxon>
        <taxon>Lactobacillales</taxon>
        <taxon>Streptococcaceae</taxon>
        <taxon>Streptococcus</taxon>
    </lineage>
</organism>
<reference key="1">
    <citation type="journal article" date="2010" name="Genome Biol.">
        <title>Structure and dynamics of the pan-genome of Streptococcus pneumoniae and closely related species.</title>
        <authorList>
            <person name="Donati C."/>
            <person name="Hiller N.L."/>
            <person name="Tettelin H."/>
            <person name="Muzzi A."/>
            <person name="Croucher N.J."/>
            <person name="Angiuoli S.V."/>
            <person name="Oggioni M."/>
            <person name="Dunning Hotopp J.C."/>
            <person name="Hu F.Z."/>
            <person name="Riley D.R."/>
            <person name="Covacci A."/>
            <person name="Mitchell T.J."/>
            <person name="Bentley S.D."/>
            <person name="Kilian M."/>
            <person name="Ehrlich G.D."/>
            <person name="Rappuoli R."/>
            <person name="Moxon E.R."/>
            <person name="Masignani V."/>
        </authorList>
    </citation>
    <scope>NUCLEOTIDE SEQUENCE [LARGE SCALE GENOMIC DNA]</scope>
    <source>
        <strain>Hungary19A-6</strain>
    </source>
</reference>
<dbReference type="EMBL" id="CP000936">
    <property type="protein sequence ID" value="ACA36571.1"/>
    <property type="molecule type" value="Genomic_DNA"/>
</dbReference>
<dbReference type="RefSeq" id="WP_001232085.1">
    <property type="nucleotide sequence ID" value="NC_010380.1"/>
</dbReference>
<dbReference type="SMR" id="B1IBB0"/>
<dbReference type="KEGG" id="spv:SPH_1051"/>
<dbReference type="HOGENOM" id="CLU_177534_1_0_9"/>
<dbReference type="Proteomes" id="UP000002163">
    <property type="component" value="Chromosome"/>
</dbReference>
<dbReference type="Gene3D" id="1.10.150.260">
    <property type="entry name" value="YozE SAM-like"/>
    <property type="match status" value="1"/>
</dbReference>
<dbReference type="HAMAP" id="MF_01538">
    <property type="entry name" value="UPF0346"/>
    <property type="match status" value="1"/>
</dbReference>
<dbReference type="InterPro" id="IPR010673">
    <property type="entry name" value="UPF0346"/>
</dbReference>
<dbReference type="InterPro" id="IPR023089">
    <property type="entry name" value="YozE_SAM-like"/>
</dbReference>
<dbReference type="InterPro" id="IPR036806">
    <property type="entry name" value="YozE_SAM-like_sf"/>
</dbReference>
<dbReference type="NCBIfam" id="NF010193">
    <property type="entry name" value="PRK13672.1"/>
    <property type="match status" value="1"/>
</dbReference>
<dbReference type="Pfam" id="PF06855">
    <property type="entry name" value="YozE_SAM_like"/>
    <property type="match status" value="1"/>
</dbReference>
<dbReference type="PIRSF" id="PIRSF037262">
    <property type="entry name" value="UCP037262"/>
    <property type="match status" value="1"/>
</dbReference>
<dbReference type="SUPFAM" id="SSF140652">
    <property type="entry name" value="YozE-like"/>
    <property type="match status" value="1"/>
</dbReference>
<proteinExistence type="inferred from homology"/>
<name>Y1051_STRPI</name>
<sequence length="71" mass="8451">MRKSFYTWLMTERNPKSNSPKAILADLAFEESAFPKHTDDFDEVSRFLEEHASFSFNLGDFDSIWQEYLEH</sequence>
<feature type="chain" id="PRO_1000198692" description="UPF0346 protein SPH_1051">
    <location>
        <begin position="1"/>
        <end position="71"/>
    </location>
</feature>
<gene>
    <name type="ordered locus">SPH_1051</name>
</gene>